<proteinExistence type="inferred from homology"/>
<protein>
    <recommendedName>
        <fullName evidence="1">Rhamnulokinase</fullName>
        <shortName evidence="1">RhaB</shortName>
        <ecNumber evidence="1">2.7.1.5</ecNumber>
    </recommendedName>
    <alternativeName>
        <fullName evidence="1">ATP:L-rhamnulose phosphotransferase</fullName>
    </alternativeName>
    <alternativeName>
        <fullName evidence="1">L-rhamnulose 1-kinase</fullName>
    </alternativeName>
    <alternativeName>
        <fullName evidence="1">Rhamnulose kinase</fullName>
    </alternativeName>
</protein>
<evidence type="ECO:0000255" key="1">
    <source>
        <dbReference type="HAMAP-Rule" id="MF_01535"/>
    </source>
</evidence>
<organism>
    <name type="scientific">Escherichia coli O139:H28 (strain E24377A / ETEC)</name>
    <dbReference type="NCBI Taxonomy" id="331111"/>
    <lineage>
        <taxon>Bacteria</taxon>
        <taxon>Pseudomonadati</taxon>
        <taxon>Pseudomonadota</taxon>
        <taxon>Gammaproteobacteria</taxon>
        <taxon>Enterobacterales</taxon>
        <taxon>Enterobacteriaceae</taxon>
        <taxon>Escherichia</taxon>
    </lineage>
</organism>
<name>RHAB_ECO24</name>
<gene>
    <name evidence="1" type="primary">rhaB</name>
    <name type="ordered locus">EcE24377A_4435</name>
</gene>
<accession>A7ZUB5</accession>
<dbReference type="EC" id="2.7.1.5" evidence="1"/>
<dbReference type="EMBL" id="CP000800">
    <property type="protein sequence ID" value="ABV17166.1"/>
    <property type="molecule type" value="Genomic_DNA"/>
</dbReference>
<dbReference type="RefSeq" id="WP_000144052.1">
    <property type="nucleotide sequence ID" value="NC_009801.1"/>
</dbReference>
<dbReference type="SMR" id="A7ZUB5"/>
<dbReference type="GeneID" id="75204578"/>
<dbReference type="KEGG" id="ecw:EcE24377A_4435"/>
<dbReference type="HOGENOM" id="CLU_039395_0_0_6"/>
<dbReference type="UniPathway" id="UPA00541">
    <property type="reaction ID" value="UER00602"/>
</dbReference>
<dbReference type="Proteomes" id="UP000001122">
    <property type="component" value="Chromosome"/>
</dbReference>
<dbReference type="GO" id="GO:0005829">
    <property type="term" value="C:cytosol"/>
    <property type="evidence" value="ECO:0007669"/>
    <property type="project" value="TreeGrafter"/>
</dbReference>
<dbReference type="GO" id="GO:0005524">
    <property type="term" value="F:ATP binding"/>
    <property type="evidence" value="ECO:0007669"/>
    <property type="project" value="UniProtKB-KW"/>
</dbReference>
<dbReference type="GO" id="GO:0004370">
    <property type="term" value="F:glycerol kinase activity"/>
    <property type="evidence" value="ECO:0007669"/>
    <property type="project" value="TreeGrafter"/>
</dbReference>
<dbReference type="GO" id="GO:0008993">
    <property type="term" value="F:rhamnulokinase activity"/>
    <property type="evidence" value="ECO:0007669"/>
    <property type="project" value="UniProtKB-UniRule"/>
</dbReference>
<dbReference type="GO" id="GO:0006071">
    <property type="term" value="P:glycerol metabolic process"/>
    <property type="evidence" value="ECO:0007669"/>
    <property type="project" value="TreeGrafter"/>
</dbReference>
<dbReference type="GO" id="GO:0019301">
    <property type="term" value="P:rhamnose catabolic process"/>
    <property type="evidence" value="ECO:0007669"/>
    <property type="project" value="UniProtKB-UniRule"/>
</dbReference>
<dbReference type="CDD" id="cd07771">
    <property type="entry name" value="ASKHA_NBD_FGGY_RhaB-like"/>
    <property type="match status" value="1"/>
</dbReference>
<dbReference type="FunFam" id="3.30.420.40:FF:000064">
    <property type="entry name" value="Rhamnulokinase"/>
    <property type="match status" value="1"/>
</dbReference>
<dbReference type="FunFam" id="3.30.420.40:FF:000073">
    <property type="entry name" value="Rhamnulokinase"/>
    <property type="match status" value="1"/>
</dbReference>
<dbReference type="Gene3D" id="3.30.420.40">
    <property type="match status" value="2"/>
</dbReference>
<dbReference type="HAMAP" id="MF_01535">
    <property type="entry name" value="Rhamnulokinase"/>
    <property type="match status" value="1"/>
</dbReference>
<dbReference type="InterPro" id="IPR043129">
    <property type="entry name" value="ATPase_NBD"/>
</dbReference>
<dbReference type="InterPro" id="IPR018485">
    <property type="entry name" value="FGGY_C"/>
</dbReference>
<dbReference type="InterPro" id="IPR018484">
    <property type="entry name" value="FGGY_N"/>
</dbReference>
<dbReference type="InterPro" id="IPR013449">
    <property type="entry name" value="Rhamnulokinase"/>
</dbReference>
<dbReference type="NCBIfam" id="NF007925">
    <property type="entry name" value="PRK10640.1"/>
    <property type="match status" value="1"/>
</dbReference>
<dbReference type="NCBIfam" id="TIGR02627">
    <property type="entry name" value="rhamnulo_kin"/>
    <property type="match status" value="1"/>
</dbReference>
<dbReference type="PANTHER" id="PTHR10196:SF93">
    <property type="entry name" value="L-RHAMNULOKINASE"/>
    <property type="match status" value="1"/>
</dbReference>
<dbReference type="PANTHER" id="PTHR10196">
    <property type="entry name" value="SUGAR KINASE"/>
    <property type="match status" value="1"/>
</dbReference>
<dbReference type="Pfam" id="PF02782">
    <property type="entry name" value="FGGY_C"/>
    <property type="match status" value="1"/>
</dbReference>
<dbReference type="Pfam" id="PF00370">
    <property type="entry name" value="FGGY_N"/>
    <property type="match status" value="1"/>
</dbReference>
<dbReference type="SUPFAM" id="SSF53067">
    <property type="entry name" value="Actin-like ATPase domain"/>
    <property type="match status" value="2"/>
</dbReference>
<feature type="chain" id="PRO_1000068715" description="Rhamnulokinase">
    <location>
        <begin position="1"/>
        <end position="489"/>
    </location>
</feature>
<feature type="active site" description="Proton acceptor" evidence="1">
    <location>
        <position position="237"/>
    </location>
</feature>
<feature type="binding site" evidence="1">
    <location>
        <begin position="13"/>
        <end position="17"/>
    </location>
    <ligand>
        <name>ATP</name>
        <dbReference type="ChEBI" id="CHEBI:30616"/>
    </ligand>
</feature>
<feature type="binding site" evidence="1">
    <location>
        <position position="83"/>
    </location>
    <ligand>
        <name>substrate</name>
    </ligand>
</feature>
<feature type="binding site" evidence="1">
    <location>
        <begin position="236"/>
        <end position="238"/>
    </location>
    <ligand>
        <name>substrate</name>
    </ligand>
</feature>
<feature type="binding site" evidence="1">
    <location>
        <position position="259"/>
    </location>
    <ligand>
        <name>ATP</name>
        <dbReference type="ChEBI" id="CHEBI:30616"/>
    </ligand>
</feature>
<feature type="binding site" evidence="1">
    <location>
        <position position="296"/>
    </location>
    <ligand>
        <name>substrate</name>
    </ligand>
</feature>
<feature type="binding site" evidence="1">
    <location>
        <position position="304"/>
    </location>
    <ligand>
        <name>ATP</name>
        <dbReference type="ChEBI" id="CHEBI:30616"/>
    </ligand>
</feature>
<feature type="binding site" evidence="1">
    <location>
        <position position="402"/>
    </location>
    <ligand>
        <name>ATP</name>
        <dbReference type="ChEBI" id="CHEBI:30616"/>
    </ligand>
</feature>
<feature type="disulfide bond" evidence="1">
    <location>
        <begin position="68"/>
        <end position="222"/>
    </location>
</feature>
<feature type="disulfide bond" evidence="1">
    <location>
        <begin position="353"/>
        <end position="370"/>
    </location>
</feature>
<feature type="disulfide bond" evidence="1">
    <location>
        <begin position="413"/>
        <end position="417"/>
    </location>
</feature>
<comment type="function">
    <text evidence="1">Involved in the catabolism of L-rhamnose (6-deoxy-L-mannose). Catalyzes the transfer of the gamma-phosphate group from ATP to the 1-hydroxyl group of L-rhamnulose to yield L-rhamnulose 1-phosphate.</text>
</comment>
<comment type="catalytic activity">
    <reaction evidence="1">
        <text>L-rhamnulose + ATP = L-rhamnulose 1-phosphate + ADP + H(+)</text>
        <dbReference type="Rhea" id="RHEA:20117"/>
        <dbReference type="ChEBI" id="CHEBI:15378"/>
        <dbReference type="ChEBI" id="CHEBI:17897"/>
        <dbReference type="ChEBI" id="CHEBI:30616"/>
        <dbReference type="ChEBI" id="CHEBI:58313"/>
        <dbReference type="ChEBI" id="CHEBI:456216"/>
        <dbReference type="EC" id="2.7.1.5"/>
    </reaction>
</comment>
<comment type="cofactor">
    <cofactor evidence="1">
        <name>Mg(2+)</name>
        <dbReference type="ChEBI" id="CHEBI:18420"/>
    </cofactor>
</comment>
<comment type="pathway">
    <text evidence="1">Carbohydrate degradation; L-rhamnose degradation; glycerone phosphate from L-rhamnose: step 2/3.</text>
</comment>
<comment type="subunit">
    <text evidence="1">Monomer.</text>
</comment>
<comment type="similarity">
    <text evidence="1">Belongs to the rhamnulokinase family.</text>
</comment>
<sequence>MTFRNCVAVDLGASSGRVMLARYERECRSLTLREIHRFKNGLHSQNGYVTWNVDSLESAIRLGLNKVCEEGIRIDSIGIDTWGVDFVLLDQQGQRVGLPVAYRDSRSNGLMAQAQQQLGKRDIYQRSGIQFLPFNTLYQLRALTEQQPELIPHIAHALLMPDYFSYRLTGKMNWEYTNATTTQLVNINSDDWDESLLAWSGANKAWFGRPTHPGNVIGHWICPQGNEIPVVAVASHDTASAVIASPLNGSRAAYLSSGTWSLMGFESQTPFTNDTALAANITNEGGAEGRYRVLKNIMGLWLLQRVLQERQINDLPALIAATQALPACRFIINPNDDRFINPEAMCSEIQAACRETAQPIPESDAELARCIFDSLALLYADVLHELAQLRGEDFSQLHIVGGGCQNTLLNQLCADACGIRVIAGPVEASTLGNIGIQLMTLDELNNVDDFRQVVSTTANLTTFTPNPDSEIAHYVAQIHSTRQTKELCA</sequence>
<reference key="1">
    <citation type="journal article" date="2008" name="J. Bacteriol.">
        <title>The pangenome structure of Escherichia coli: comparative genomic analysis of E. coli commensal and pathogenic isolates.</title>
        <authorList>
            <person name="Rasko D.A."/>
            <person name="Rosovitz M.J."/>
            <person name="Myers G.S.A."/>
            <person name="Mongodin E.F."/>
            <person name="Fricke W.F."/>
            <person name="Gajer P."/>
            <person name="Crabtree J."/>
            <person name="Sebaihia M."/>
            <person name="Thomson N.R."/>
            <person name="Chaudhuri R."/>
            <person name="Henderson I.R."/>
            <person name="Sperandio V."/>
            <person name="Ravel J."/>
        </authorList>
    </citation>
    <scope>NUCLEOTIDE SEQUENCE [LARGE SCALE GENOMIC DNA]</scope>
    <source>
        <strain>E24377A / ETEC</strain>
    </source>
</reference>
<keyword id="KW-0067">ATP-binding</keyword>
<keyword id="KW-1015">Disulfide bond</keyword>
<keyword id="KW-0418">Kinase</keyword>
<keyword id="KW-0460">Magnesium</keyword>
<keyword id="KW-0547">Nucleotide-binding</keyword>
<keyword id="KW-1185">Reference proteome</keyword>
<keyword id="KW-0684">Rhamnose metabolism</keyword>
<keyword id="KW-0808">Transferase</keyword>